<name>RS10_ERWT9</name>
<protein>
    <recommendedName>
        <fullName evidence="1">Small ribosomal subunit protein uS10</fullName>
    </recommendedName>
    <alternativeName>
        <fullName evidence="2">30S ribosomal protein S10</fullName>
    </alternativeName>
</protein>
<accession>B2VK34</accession>
<proteinExistence type="inferred from homology"/>
<feature type="chain" id="PRO_1000127124" description="Small ribosomal subunit protein uS10">
    <location>
        <begin position="1"/>
        <end position="103"/>
    </location>
</feature>
<keyword id="KW-1185">Reference proteome</keyword>
<keyword id="KW-0687">Ribonucleoprotein</keyword>
<keyword id="KW-0689">Ribosomal protein</keyword>
<comment type="function">
    <text evidence="1">Involved in the binding of tRNA to the ribosomes.</text>
</comment>
<comment type="subunit">
    <text evidence="1">Part of the 30S ribosomal subunit.</text>
</comment>
<comment type="similarity">
    <text evidence="1">Belongs to the universal ribosomal protein uS10 family.</text>
</comment>
<reference key="1">
    <citation type="journal article" date="2008" name="Environ. Microbiol.">
        <title>The genome of Erwinia tasmaniensis strain Et1/99, a non-pathogenic bacterium in the genus Erwinia.</title>
        <authorList>
            <person name="Kube M."/>
            <person name="Migdoll A.M."/>
            <person name="Mueller I."/>
            <person name="Kuhl H."/>
            <person name="Beck A."/>
            <person name="Reinhardt R."/>
            <person name="Geider K."/>
        </authorList>
    </citation>
    <scope>NUCLEOTIDE SEQUENCE [LARGE SCALE GENOMIC DNA]</scope>
    <source>
        <strain>DSM 17950 / CFBP 7177 / CIP 109463 / NCPPB 4357 / Et1/99</strain>
    </source>
</reference>
<organism>
    <name type="scientific">Erwinia tasmaniensis (strain DSM 17950 / CFBP 7177 / CIP 109463 / NCPPB 4357 / Et1/99)</name>
    <dbReference type="NCBI Taxonomy" id="465817"/>
    <lineage>
        <taxon>Bacteria</taxon>
        <taxon>Pseudomonadati</taxon>
        <taxon>Pseudomonadota</taxon>
        <taxon>Gammaproteobacteria</taxon>
        <taxon>Enterobacterales</taxon>
        <taxon>Erwiniaceae</taxon>
        <taxon>Erwinia</taxon>
    </lineage>
</organism>
<sequence length="103" mass="11767">MQNQRIRIRLKAFDHRLIDQSTAEIVETAKRTGAQVRGPIPLPTRKERFTVLISPHVNKDARDQYEIRTHKRLVDIVEPTEKTVDALMRLDLAAGVDVQISLG</sequence>
<evidence type="ECO:0000255" key="1">
    <source>
        <dbReference type="HAMAP-Rule" id="MF_00508"/>
    </source>
</evidence>
<evidence type="ECO:0000305" key="2"/>
<gene>
    <name evidence="1" type="primary">rpsJ</name>
    <name type="ordered locus">ETA_31650</name>
</gene>
<dbReference type="EMBL" id="CU468135">
    <property type="protein sequence ID" value="CAO98211.1"/>
    <property type="molecule type" value="Genomic_DNA"/>
</dbReference>
<dbReference type="RefSeq" id="WP_001181005.1">
    <property type="nucleotide sequence ID" value="NC_010694.1"/>
</dbReference>
<dbReference type="SMR" id="B2VK34"/>
<dbReference type="STRING" id="465817.ETA_31650"/>
<dbReference type="GeneID" id="98390443"/>
<dbReference type="KEGG" id="eta:ETA_31650"/>
<dbReference type="eggNOG" id="COG0051">
    <property type="taxonomic scope" value="Bacteria"/>
</dbReference>
<dbReference type="HOGENOM" id="CLU_122625_1_3_6"/>
<dbReference type="OrthoDB" id="9804464at2"/>
<dbReference type="Proteomes" id="UP000001726">
    <property type="component" value="Chromosome"/>
</dbReference>
<dbReference type="GO" id="GO:1990904">
    <property type="term" value="C:ribonucleoprotein complex"/>
    <property type="evidence" value="ECO:0007669"/>
    <property type="project" value="UniProtKB-KW"/>
</dbReference>
<dbReference type="GO" id="GO:0005840">
    <property type="term" value="C:ribosome"/>
    <property type="evidence" value="ECO:0007669"/>
    <property type="project" value="UniProtKB-KW"/>
</dbReference>
<dbReference type="GO" id="GO:0003735">
    <property type="term" value="F:structural constituent of ribosome"/>
    <property type="evidence" value="ECO:0007669"/>
    <property type="project" value="InterPro"/>
</dbReference>
<dbReference type="GO" id="GO:0000049">
    <property type="term" value="F:tRNA binding"/>
    <property type="evidence" value="ECO:0007669"/>
    <property type="project" value="UniProtKB-UniRule"/>
</dbReference>
<dbReference type="GO" id="GO:0006412">
    <property type="term" value="P:translation"/>
    <property type="evidence" value="ECO:0007669"/>
    <property type="project" value="UniProtKB-UniRule"/>
</dbReference>
<dbReference type="FunFam" id="3.30.70.600:FF:000001">
    <property type="entry name" value="30S ribosomal protein S10"/>
    <property type="match status" value="1"/>
</dbReference>
<dbReference type="Gene3D" id="3.30.70.600">
    <property type="entry name" value="Ribosomal protein S10 domain"/>
    <property type="match status" value="1"/>
</dbReference>
<dbReference type="HAMAP" id="MF_00508">
    <property type="entry name" value="Ribosomal_uS10"/>
    <property type="match status" value="1"/>
</dbReference>
<dbReference type="InterPro" id="IPR001848">
    <property type="entry name" value="Ribosomal_uS10"/>
</dbReference>
<dbReference type="InterPro" id="IPR018268">
    <property type="entry name" value="Ribosomal_uS10_CS"/>
</dbReference>
<dbReference type="InterPro" id="IPR027486">
    <property type="entry name" value="Ribosomal_uS10_dom"/>
</dbReference>
<dbReference type="InterPro" id="IPR036838">
    <property type="entry name" value="Ribosomal_uS10_dom_sf"/>
</dbReference>
<dbReference type="NCBIfam" id="NF001861">
    <property type="entry name" value="PRK00596.1"/>
    <property type="match status" value="1"/>
</dbReference>
<dbReference type="NCBIfam" id="TIGR01049">
    <property type="entry name" value="rpsJ_bact"/>
    <property type="match status" value="1"/>
</dbReference>
<dbReference type="PANTHER" id="PTHR11700">
    <property type="entry name" value="30S RIBOSOMAL PROTEIN S10 FAMILY MEMBER"/>
    <property type="match status" value="1"/>
</dbReference>
<dbReference type="Pfam" id="PF00338">
    <property type="entry name" value="Ribosomal_S10"/>
    <property type="match status" value="1"/>
</dbReference>
<dbReference type="PRINTS" id="PR00971">
    <property type="entry name" value="RIBOSOMALS10"/>
</dbReference>
<dbReference type="SMART" id="SM01403">
    <property type="entry name" value="Ribosomal_S10"/>
    <property type="match status" value="1"/>
</dbReference>
<dbReference type="SUPFAM" id="SSF54999">
    <property type="entry name" value="Ribosomal protein S10"/>
    <property type="match status" value="1"/>
</dbReference>
<dbReference type="PROSITE" id="PS00361">
    <property type="entry name" value="RIBOSOMAL_S10"/>
    <property type="match status" value="1"/>
</dbReference>